<organism>
    <name type="scientific">Escherichia coli O157:H7</name>
    <dbReference type="NCBI Taxonomy" id="83334"/>
    <lineage>
        <taxon>Bacteria</taxon>
        <taxon>Pseudomonadati</taxon>
        <taxon>Pseudomonadota</taxon>
        <taxon>Gammaproteobacteria</taxon>
        <taxon>Enterobacterales</taxon>
        <taxon>Enterobacteriaceae</taxon>
        <taxon>Escherichia</taxon>
    </lineage>
</organism>
<proteinExistence type="inferred from homology"/>
<reference key="1">
    <citation type="journal article" date="2001" name="Nature">
        <title>Genome sequence of enterohaemorrhagic Escherichia coli O157:H7.</title>
        <authorList>
            <person name="Perna N.T."/>
            <person name="Plunkett G. III"/>
            <person name="Burland V."/>
            <person name="Mau B."/>
            <person name="Glasner J.D."/>
            <person name="Rose D.J."/>
            <person name="Mayhew G.F."/>
            <person name="Evans P.S."/>
            <person name="Gregor J."/>
            <person name="Kirkpatrick H.A."/>
            <person name="Posfai G."/>
            <person name="Hackett J."/>
            <person name="Klink S."/>
            <person name="Boutin A."/>
            <person name="Shao Y."/>
            <person name="Miller L."/>
            <person name="Grotbeck E.J."/>
            <person name="Davis N.W."/>
            <person name="Lim A."/>
            <person name="Dimalanta E.T."/>
            <person name="Potamousis K."/>
            <person name="Apodaca J."/>
            <person name="Anantharaman T.S."/>
            <person name="Lin J."/>
            <person name="Yen G."/>
            <person name="Schwartz D.C."/>
            <person name="Welch R.A."/>
            <person name="Blattner F.R."/>
        </authorList>
    </citation>
    <scope>NUCLEOTIDE SEQUENCE [LARGE SCALE GENOMIC DNA]</scope>
    <source>
        <strain>O157:H7 / EDL933 / ATCC 700927 / EHEC</strain>
    </source>
</reference>
<reference key="2">
    <citation type="journal article" date="2001" name="DNA Res.">
        <title>Complete genome sequence of enterohemorrhagic Escherichia coli O157:H7 and genomic comparison with a laboratory strain K-12.</title>
        <authorList>
            <person name="Hayashi T."/>
            <person name="Makino K."/>
            <person name="Ohnishi M."/>
            <person name="Kurokawa K."/>
            <person name="Ishii K."/>
            <person name="Yokoyama K."/>
            <person name="Han C.-G."/>
            <person name="Ohtsubo E."/>
            <person name="Nakayama K."/>
            <person name="Murata T."/>
            <person name="Tanaka M."/>
            <person name="Tobe T."/>
            <person name="Iida T."/>
            <person name="Takami H."/>
            <person name="Honda T."/>
            <person name="Sasakawa C."/>
            <person name="Ogasawara N."/>
            <person name="Yasunaga T."/>
            <person name="Kuhara S."/>
            <person name="Shiba T."/>
            <person name="Hattori M."/>
            <person name="Shinagawa H."/>
        </authorList>
    </citation>
    <scope>NUCLEOTIDE SEQUENCE [LARGE SCALE GENOMIC DNA]</scope>
    <source>
        <strain>O157:H7 / Sakai / RIMD 0509952 / EHEC</strain>
    </source>
</reference>
<sequence length="103" mass="11622">MGKLTLLLLAILVWLQYSLWFGKNGIHDYTRVNDDVAAQQATNAKLKARNDQLFAEIDDLNGGQEALEERARNELSMTRPGETFYRLVPDASKRAQSAGQNNR</sequence>
<comment type="function">
    <text evidence="1">Essential cell division protein. May link together the upstream cell division proteins, which are predominantly cytoplasmic, with the downstream cell division proteins, which are predominantly periplasmic.</text>
</comment>
<comment type="subunit">
    <text evidence="1">Part of a complex composed of FtsB, FtsL and FtsQ.</text>
</comment>
<comment type="subcellular location">
    <subcellularLocation>
        <location evidence="1">Cell inner membrane</location>
        <topology evidence="1">Single-pass type II membrane protein</topology>
    </subcellularLocation>
    <text evidence="1">Localizes to the division septum.</text>
</comment>
<comment type="similarity">
    <text evidence="1">Belongs to the FtsB family.</text>
</comment>
<keyword id="KW-0131">Cell cycle</keyword>
<keyword id="KW-0132">Cell division</keyword>
<keyword id="KW-0997">Cell inner membrane</keyword>
<keyword id="KW-1003">Cell membrane</keyword>
<keyword id="KW-0175">Coiled coil</keyword>
<keyword id="KW-0472">Membrane</keyword>
<keyword id="KW-1185">Reference proteome</keyword>
<keyword id="KW-0812">Transmembrane</keyword>
<keyword id="KW-1133">Transmembrane helix</keyword>
<name>FTSB_ECO57</name>
<protein>
    <recommendedName>
        <fullName evidence="1">Cell division protein FtsB</fullName>
    </recommendedName>
</protein>
<accession>P0A6S6</accession>
<accession>Q46894</accession>
<evidence type="ECO:0000255" key="1">
    <source>
        <dbReference type="HAMAP-Rule" id="MF_00599"/>
    </source>
</evidence>
<gene>
    <name evidence="1" type="primary">ftsB</name>
    <name type="ordered locus">Z4056</name>
    <name type="ordered locus">ECs3602</name>
</gene>
<feature type="chain" id="PRO_0000214443" description="Cell division protein FtsB">
    <location>
        <begin position="1"/>
        <end position="103"/>
    </location>
</feature>
<feature type="topological domain" description="Cytoplasmic" evidence="1">
    <location>
        <begin position="1"/>
        <end position="3"/>
    </location>
</feature>
<feature type="transmembrane region" description="Helical" evidence="1">
    <location>
        <begin position="4"/>
        <end position="21"/>
    </location>
</feature>
<feature type="topological domain" description="Periplasmic" evidence="1">
    <location>
        <begin position="22"/>
        <end position="103"/>
    </location>
</feature>
<feature type="coiled-coil region" evidence="1">
    <location>
        <begin position="31"/>
        <end position="71"/>
    </location>
</feature>
<dbReference type="EMBL" id="AE005174">
    <property type="protein sequence ID" value="AAG57855.1"/>
    <property type="molecule type" value="Genomic_DNA"/>
</dbReference>
<dbReference type="EMBL" id="BA000007">
    <property type="protein sequence ID" value="BAB37025.1"/>
    <property type="molecule type" value="Genomic_DNA"/>
</dbReference>
<dbReference type="PIR" id="B91079">
    <property type="entry name" value="B91079"/>
</dbReference>
<dbReference type="PIR" id="C85924">
    <property type="entry name" value="C85924"/>
</dbReference>
<dbReference type="RefSeq" id="NP_311629.1">
    <property type="nucleotide sequence ID" value="NC_002695.1"/>
</dbReference>
<dbReference type="RefSeq" id="WP_000517476.1">
    <property type="nucleotide sequence ID" value="NZ_VOAI01000003.1"/>
</dbReference>
<dbReference type="SMR" id="P0A6S6"/>
<dbReference type="STRING" id="155864.Z4056"/>
<dbReference type="GeneID" id="914676"/>
<dbReference type="GeneID" id="93779258"/>
<dbReference type="KEGG" id="ece:Z4056"/>
<dbReference type="KEGG" id="ecs:ECs_3602"/>
<dbReference type="PATRIC" id="fig|386585.9.peg.3765"/>
<dbReference type="eggNOG" id="COG2919">
    <property type="taxonomic scope" value="Bacteria"/>
</dbReference>
<dbReference type="HOGENOM" id="CLU_134863_5_2_6"/>
<dbReference type="OMA" id="YELGMVK"/>
<dbReference type="Proteomes" id="UP000000558">
    <property type="component" value="Chromosome"/>
</dbReference>
<dbReference type="Proteomes" id="UP000002519">
    <property type="component" value="Chromosome"/>
</dbReference>
<dbReference type="GO" id="GO:0032153">
    <property type="term" value="C:cell division site"/>
    <property type="evidence" value="ECO:0007669"/>
    <property type="project" value="UniProtKB-UniRule"/>
</dbReference>
<dbReference type="GO" id="GO:0030428">
    <property type="term" value="C:cell septum"/>
    <property type="evidence" value="ECO:0007669"/>
    <property type="project" value="TreeGrafter"/>
</dbReference>
<dbReference type="GO" id="GO:0005886">
    <property type="term" value="C:plasma membrane"/>
    <property type="evidence" value="ECO:0007669"/>
    <property type="project" value="UniProtKB-SubCell"/>
</dbReference>
<dbReference type="GO" id="GO:0043093">
    <property type="term" value="P:FtsZ-dependent cytokinesis"/>
    <property type="evidence" value="ECO:0007669"/>
    <property type="project" value="UniProtKB-UniRule"/>
</dbReference>
<dbReference type="FunFam" id="1.20.5.400:FF:000001">
    <property type="entry name" value="Cell division protein FtsB"/>
    <property type="match status" value="1"/>
</dbReference>
<dbReference type="Gene3D" id="1.20.5.400">
    <property type="match status" value="1"/>
</dbReference>
<dbReference type="HAMAP" id="MF_00599">
    <property type="entry name" value="FtsB"/>
    <property type="match status" value="1"/>
</dbReference>
<dbReference type="InterPro" id="IPR023081">
    <property type="entry name" value="Cell_div_FtsB"/>
</dbReference>
<dbReference type="InterPro" id="IPR007060">
    <property type="entry name" value="FtsL/DivIC"/>
</dbReference>
<dbReference type="NCBIfam" id="NF002058">
    <property type="entry name" value="PRK00888.1"/>
    <property type="match status" value="1"/>
</dbReference>
<dbReference type="PANTHER" id="PTHR37485">
    <property type="entry name" value="CELL DIVISION PROTEIN FTSB"/>
    <property type="match status" value="1"/>
</dbReference>
<dbReference type="PANTHER" id="PTHR37485:SF1">
    <property type="entry name" value="CELL DIVISION PROTEIN FTSB"/>
    <property type="match status" value="1"/>
</dbReference>
<dbReference type="Pfam" id="PF04977">
    <property type="entry name" value="DivIC"/>
    <property type="match status" value="1"/>
</dbReference>